<organism>
    <name type="scientific">Clostridium botulinum (strain Hall / ATCC 3502 / NCTC 13319 / Type A)</name>
    <dbReference type="NCBI Taxonomy" id="441771"/>
    <lineage>
        <taxon>Bacteria</taxon>
        <taxon>Bacillati</taxon>
        <taxon>Bacillota</taxon>
        <taxon>Clostridia</taxon>
        <taxon>Eubacteriales</taxon>
        <taxon>Clostridiaceae</taxon>
        <taxon>Clostridium</taxon>
    </lineage>
</organism>
<name>PYRH_CLOBH</name>
<accession>A5I4L0</accession>
<accession>A7G5Q9</accession>
<evidence type="ECO:0000255" key="1">
    <source>
        <dbReference type="HAMAP-Rule" id="MF_01220"/>
    </source>
</evidence>
<protein>
    <recommendedName>
        <fullName evidence="1">Uridylate kinase</fullName>
        <shortName evidence="1">UK</shortName>
        <ecNumber evidence="1">2.7.4.22</ecNumber>
    </recommendedName>
    <alternativeName>
        <fullName evidence="1">Uridine monophosphate kinase</fullName>
        <shortName evidence="1">UMP kinase</shortName>
        <shortName evidence="1">UMPK</shortName>
    </alternativeName>
</protein>
<comment type="function">
    <text evidence="1">Catalyzes the reversible phosphorylation of UMP to UDP.</text>
</comment>
<comment type="catalytic activity">
    <reaction evidence="1">
        <text>UMP + ATP = UDP + ADP</text>
        <dbReference type="Rhea" id="RHEA:24400"/>
        <dbReference type="ChEBI" id="CHEBI:30616"/>
        <dbReference type="ChEBI" id="CHEBI:57865"/>
        <dbReference type="ChEBI" id="CHEBI:58223"/>
        <dbReference type="ChEBI" id="CHEBI:456216"/>
        <dbReference type="EC" id="2.7.4.22"/>
    </reaction>
</comment>
<comment type="activity regulation">
    <text evidence="1">Allosterically activated by GTP. Inhibited by UTP.</text>
</comment>
<comment type="pathway">
    <text evidence="1">Pyrimidine metabolism; CTP biosynthesis via de novo pathway; UDP from UMP (UMPK route): step 1/1.</text>
</comment>
<comment type="subunit">
    <text evidence="1">Homohexamer.</text>
</comment>
<comment type="subcellular location">
    <subcellularLocation>
        <location evidence="1">Cytoplasm</location>
    </subcellularLocation>
</comment>
<comment type="similarity">
    <text evidence="1">Belongs to the UMP kinase family.</text>
</comment>
<gene>
    <name evidence="1" type="primary">pyrH</name>
    <name type="ordered locus">CBO2433</name>
    <name type="ordered locus">CLC_2280</name>
</gene>
<feature type="chain" id="PRO_1000053910" description="Uridylate kinase">
    <location>
        <begin position="1"/>
        <end position="238"/>
    </location>
</feature>
<feature type="region of interest" description="Involved in allosteric activation by GTP" evidence="1">
    <location>
        <begin position="20"/>
        <end position="25"/>
    </location>
</feature>
<feature type="binding site" evidence="1">
    <location>
        <begin position="12"/>
        <end position="15"/>
    </location>
    <ligand>
        <name>ATP</name>
        <dbReference type="ChEBI" id="CHEBI:30616"/>
    </ligand>
</feature>
<feature type="binding site" evidence="1">
    <location>
        <position position="54"/>
    </location>
    <ligand>
        <name>UMP</name>
        <dbReference type="ChEBI" id="CHEBI:57865"/>
    </ligand>
</feature>
<feature type="binding site" evidence="1">
    <location>
        <position position="55"/>
    </location>
    <ligand>
        <name>ATP</name>
        <dbReference type="ChEBI" id="CHEBI:30616"/>
    </ligand>
</feature>
<feature type="binding site" evidence="1">
    <location>
        <position position="59"/>
    </location>
    <ligand>
        <name>ATP</name>
        <dbReference type="ChEBI" id="CHEBI:30616"/>
    </ligand>
</feature>
<feature type="binding site" evidence="1">
    <location>
        <position position="72"/>
    </location>
    <ligand>
        <name>UMP</name>
        <dbReference type="ChEBI" id="CHEBI:57865"/>
    </ligand>
</feature>
<feature type="binding site" evidence="1">
    <location>
        <begin position="133"/>
        <end position="140"/>
    </location>
    <ligand>
        <name>UMP</name>
        <dbReference type="ChEBI" id="CHEBI:57865"/>
    </ligand>
</feature>
<feature type="binding site" evidence="1">
    <location>
        <position position="166"/>
    </location>
    <ligand>
        <name>ATP</name>
        <dbReference type="ChEBI" id="CHEBI:30616"/>
    </ligand>
</feature>
<feature type="binding site" evidence="1">
    <location>
        <position position="169"/>
    </location>
    <ligand>
        <name>ATP</name>
        <dbReference type="ChEBI" id="CHEBI:30616"/>
    </ligand>
</feature>
<reference key="1">
    <citation type="journal article" date="2007" name="Genome Res.">
        <title>Genome sequence of a proteolytic (Group I) Clostridium botulinum strain Hall A and comparative analysis of the clostridial genomes.</title>
        <authorList>
            <person name="Sebaihia M."/>
            <person name="Peck M.W."/>
            <person name="Minton N.P."/>
            <person name="Thomson N.R."/>
            <person name="Holden M.T.G."/>
            <person name="Mitchell W.J."/>
            <person name="Carter A.T."/>
            <person name="Bentley S.D."/>
            <person name="Mason D.R."/>
            <person name="Crossman L."/>
            <person name="Paul C.J."/>
            <person name="Ivens A."/>
            <person name="Wells-Bennik M.H.J."/>
            <person name="Davis I.J."/>
            <person name="Cerdeno-Tarraga A.M."/>
            <person name="Churcher C."/>
            <person name="Quail M.A."/>
            <person name="Chillingworth T."/>
            <person name="Feltwell T."/>
            <person name="Fraser A."/>
            <person name="Goodhead I."/>
            <person name="Hance Z."/>
            <person name="Jagels K."/>
            <person name="Larke N."/>
            <person name="Maddison M."/>
            <person name="Moule S."/>
            <person name="Mungall K."/>
            <person name="Norbertczak H."/>
            <person name="Rabbinowitsch E."/>
            <person name="Sanders M."/>
            <person name="Simmonds M."/>
            <person name="White B."/>
            <person name="Whithead S."/>
            <person name="Parkhill J."/>
        </authorList>
    </citation>
    <scope>NUCLEOTIDE SEQUENCE [LARGE SCALE GENOMIC DNA]</scope>
    <source>
        <strain>Hall / ATCC 3502 / NCTC 13319 / Type A</strain>
    </source>
</reference>
<reference key="2">
    <citation type="journal article" date="2007" name="PLoS ONE">
        <title>Analysis of the neurotoxin complex genes in Clostridium botulinum A1-A4 and B1 strains: BoNT/A3, /Ba4 and /B1 clusters are located within plasmids.</title>
        <authorList>
            <person name="Smith T.J."/>
            <person name="Hill K.K."/>
            <person name="Foley B.T."/>
            <person name="Detter J.C."/>
            <person name="Munk A.C."/>
            <person name="Bruce D.C."/>
            <person name="Doggett N.A."/>
            <person name="Smith L.A."/>
            <person name="Marks J.D."/>
            <person name="Xie G."/>
            <person name="Brettin T.S."/>
        </authorList>
    </citation>
    <scope>NUCLEOTIDE SEQUENCE [LARGE SCALE GENOMIC DNA]</scope>
    <source>
        <strain>Hall / ATCC 3502 / NCTC 13319 / Type A</strain>
    </source>
</reference>
<keyword id="KW-0021">Allosteric enzyme</keyword>
<keyword id="KW-0067">ATP-binding</keyword>
<keyword id="KW-0963">Cytoplasm</keyword>
<keyword id="KW-0418">Kinase</keyword>
<keyword id="KW-0547">Nucleotide-binding</keyword>
<keyword id="KW-0665">Pyrimidine biosynthesis</keyword>
<keyword id="KW-1185">Reference proteome</keyword>
<keyword id="KW-0808">Transferase</keyword>
<dbReference type="EC" id="2.7.4.22" evidence="1"/>
<dbReference type="EMBL" id="CP000727">
    <property type="protein sequence ID" value="ABS38624.1"/>
    <property type="molecule type" value="Genomic_DNA"/>
</dbReference>
<dbReference type="EMBL" id="AM412317">
    <property type="protein sequence ID" value="CAL83982.1"/>
    <property type="molecule type" value="Genomic_DNA"/>
</dbReference>
<dbReference type="RefSeq" id="WP_003362575.1">
    <property type="nucleotide sequence ID" value="NC_009698.1"/>
</dbReference>
<dbReference type="RefSeq" id="YP_001254931.1">
    <property type="nucleotide sequence ID" value="NC_009495.1"/>
</dbReference>
<dbReference type="RefSeq" id="YP_001388124.1">
    <property type="nucleotide sequence ID" value="NC_009698.1"/>
</dbReference>
<dbReference type="SMR" id="A5I4L0"/>
<dbReference type="GeneID" id="5186688"/>
<dbReference type="KEGG" id="cbh:CLC_2280"/>
<dbReference type="KEGG" id="cbo:CBO2433"/>
<dbReference type="PATRIC" id="fig|413999.7.peg.2410"/>
<dbReference type="HOGENOM" id="CLU_033861_0_0_9"/>
<dbReference type="UniPathway" id="UPA00159">
    <property type="reaction ID" value="UER00275"/>
</dbReference>
<dbReference type="PRO" id="PR:A5I4L0"/>
<dbReference type="Proteomes" id="UP000001986">
    <property type="component" value="Chromosome"/>
</dbReference>
<dbReference type="GO" id="GO:0005737">
    <property type="term" value="C:cytoplasm"/>
    <property type="evidence" value="ECO:0007669"/>
    <property type="project" value="UniProtKB-SubCell"/>
</dbReference>
<dbReference type="GO" id="GO:0005524">
    <property type="term" value="F:ATP binding"/>
    <property type="evidence" value="ECO:0007669"/>
    <property type="project" value="UniProtKB-KW"/>
</dbReference>
<dbReference type="GO" id="GO:0033862">
    <property type="term" value="F:UMP kinase activity"/>
    <property type="evidence" value="ECO:0000318"/>
    <property type="project" value="GO_Central"/>
</dbReference>
<dbReference type="GO" id="GO:0044210">
    <property type="term" value="P:'de novo' CTP biosynthetic process"/>
    <property type="evidence" value="ECO:0007669"/>
    <property type="project" value="UniProtKB-UniRule"/>
</dbReference>
<dbReference type="GO" id="GO:0006225">
    <property type="term" value="P:UDP biosynthetic process"/>
    <property type="evidence" value="ECO:0000318"/>
    <property type="project" value="GO_Central"/>
</dbReference>
<dbReference type="CDD" id="cd04254">
    <property type="entry name" value="AAK_UMPK-PyrH-Ec"/>
    <property type="match status" value="1"/>
</dbReference>
<dbReference type="FunFam" id="3.40.1160.10:FF:000001">
    <property type="entry name" value="Uridylate kinase"/>
    <property type="match status" value="1"/>
</dbReference>
<dbReference type="Gene3D" id="3.40.1160.10">
    <property type="entry name" value="Acetylglutamate kinase-like"/>
    <property type="match status" value="1"/>
</dbReference>
<dbReference type="HAMAP" id="MF_01220_B">
    <property type="entry name" value="PyrH_B"/>
    <property type="match status" value="1"/>
</dbReference>
<dbReference type="InterPro" id="IPR036393">
    <property type="entry name" value="AceGlu_kinase-like_sf"/>
</dbReference>
<dbReference type="InterPro" id="IPR001048">
    <property type="entry name" value="Asp/Glu/Uridylate_kinase"/>
</dbReference>
<dbReference type="InterPro" id="IPR011817">
    <property type="entry name" value="Uridylate_kinase"/>
</dbReference>
<dbReference type="InterPro" id="IPR015963">
    <property type="entry name" value="Uridylate_kinase_bac"/>
</dbReference>
<dbReference type="NCBIfam" id="TIGR02075">
    <property type="entry name" value="pyrH_bact"/>
    <property type="match status" value="1"/>
</dbReference>
<dbReference type="PANTHER" id="PTHR42833">
    <property type="entry name" value="URIDYLATE KINASE"/>
    <property type="match status" value="1"/>
</dbReference>
<dbReference type="PANTHER" id="PTHR42833:SF4">
    <property type="entry name" value="URIDYLATE KINASE PUMPKIN, CHLOROPLASTIC"/>
    <property type="match status" value="1"/>
</dbReference>
<dbReference type="Pfam" id="PF00696">
    <property type="entry name" value="AA_kinase"/>
    <property type="match status" value="1"/>
</dbReference>
<dbReference type="PIRSF" id="PIRSF005650">
    <property type="entry name" value="Uridylate_kin"/>
    <property type="match status" value="1"/>
</dbReference>
<dbReference type="SUPFAM" id="SSF53633">
    <property type="entry name" value="Carbamate kinase-like"/>
    <property type="match status" value="1"/>
</dbReference>
<proteinExistence type="inferred from homology"/>
<sequence>MNEPKYKRVMLKLSGEALSGEKGFGFDFDFTKEISEQIKKLVDMGIEVGAVVGGGNIWRGRSGSEMDRTTADYMGMLATCINALALQDSLEQLGVNTRVQTAIEMKEIAEPFIRRRAMRHLEKERVVIFASGTGNPYFSTDTAAALRAAEIEADVILLAKKVDGVYDKDPHKYDDAKKYNKLSYIEVLEQGLQVMDSTATSLCMDNDIPILVFGLDEPCNIIKAVTGEEIGTLVSNSK</sequence>